<feature type="signal peptide" evidence="1">
    <location>
        <begin position="1"/>
        <end position="23"/>
    </location>
</feature>
<feature type="chain" id="PRO_0000430688" description="Aklavinone 7-beta-L-rhodosaminyltransferase">
    <location>
        <begin position="24"/>
        <end position="443"/>
    </location>
</feature>
<organism>
    <name type="scientific">Streptomyces galilaeus</name>
    <dbReference type="NCBI Taxonomy" id="33899"/>
    <lineage>
        <taxon>Bacteria</taxon>
        <taxon>Bacillati</taxon>
        <taxon>Actinomycetota</taxon>
        <taxon>Actinomycetes</taxon>
        <taxon>Kitasatosporales</taxon>
        <taxon>Streptomycetaceae</taxon>
        <taxon>Streptomyces</taxon>
    </lineage>
</organism>
<keyword id="KW-0045">Antibiotic biosynthesis</keyword>
<keyword id="KW-0328">Glycosyltransferase</keyword>
<keyword id="KW-0732">Signal</keyword>
<keyword id="KW-0808">Transferase</keyword>
<sequence>MRVLLTSFALDAHFNGSVPLAWALRAAGHEVRVASQPALTASITAAGLTAVPVGADPRLDEMVKGVGDAVLSHHADQSLDADTPGQLTPAFLQGWDTMMTATFYTLINDDPMVDDLVAFARGWEPDLILWEPFTFAGAVAAKVTGAAHARLLSFPDLFMSMRRAYLAQLGAAPAGPAGGNGTTHPDDSLGQWLEWTLGRYGVPFDEEAVTGQWSVDQVPRSFRPPSDRPVVGMRYVPYNGPGPAVVPDWLRVPPTRPRVCVTLGMTARTSEFPNAVPVDLVLKAVEGLDIEVVATLDAEERALLTHVPDNVRLVDHVPLHALLPTCAAIVHHGGAGTWSTALVEGVPQIAMGWIWDAIDRAQRQQALGAGLHLPSHEVTVEGLRGRLVRLLDEPSFTAAAARLRAEAESEPTPAQVVPVLERLTAQHRAREPRRPGGTSPCVS</sequence>
<proteinExistence type="evidence at protein level"/>
<comment type="function">
    <text evidence="2 3">Involved in the biosynthesis of the anthracycline antitumor agent aclacinomycin A. Catalyzes the transfer of the proximal deoxyhexose, L-rhodosamine, from dTDP-beta-L-rhodosamine to the C7-OH of aklavinone aglycone to yield aclacinomycin T (rhodosaminyl-aklavinone). It can also use dTDP-2-deoxy-beta-L-fucose, TDP-2-deoxyfucose, dTDP-4-amino-2-deoxyrhamnose, TDP-L-rhodosamine as sugar donor and epsilon-rhodomycinone as sugar acceptor.</text>
</comment>
<comment type="catalytic activity">
    <reaction evidence="2 3">
        <text>dTDP-beta-L-rhodosamine + aklavinone = aclacinomycin T + dTDP + 2 H(+)</text>
        <dbReference type="Rhea" id="RHEA:41564"/>
        <dbReference type="ChEBI" id="CHEBI:15378"/>
        <dbReference type="ChEBI" id="CHEBI:31181"/>
        <dbReference type="ChEBI" id="CHEBI:58369"/>
        <dbReference type="ChEBI" id="CHEBI:77979"/>
        <dbReference type="ChEBI" id="CHEBI:78301"/>
        <dbReference type="EC" id="2.4.1.326"/>
    </reaction>
</comment>
<comment type="activity regulation">
    <text evidence="2 3">The activity of AknS is substantially increased by the addition of the accessory protein AknT.</text>
</comment>
<comment type="biophysicochemical properties">
    <kinetics>
        <KM evidence="2">3.1 uM for aklavinone (with dTDP-4-amino-2-deoxyrhamnose as sugar donor)</KM>
        <KM evidence="2">3.5 uM for aklavinone (with TDP-2-deoxyfucose as sugar donor)</KM>
        <KM evidence="3">5.7 uM for aklavinone (with TDP-L-rhodosamine as sugar donor)</KM>
        <KM evidence="3">13 uM for aklavinone (without AknT and with TDP-L-rhodosamine as sugar donor)</KM>
        <KM evidence="2">46 uM for epsilon-rhodomycinone (with TDP-2-deoxyfucose as sugar donor)</KM>
        <KM evidence="2">156 uM for dTDP-2-deoxyfucose (with epsilon-rhodomycinone as sugar acceptor)</KM>
        <KM evidence="3">280 uM for TDP-L-rhodosamine (with aklavinone as sugar acceptor)</KM>
        <KM evidence="2">287 uM for TDP-2-deoxyfucose (with aklavinone as sugar acceptor)</KM>
        <KM evidence="3">349 uM for TDP-L-rhodosamine (without AknT and with aklavinone as sugar acceptor)</KM>
        <KM evidence="2">407 uM for dTDP-4-amino-2-deoxyrhamnose (with aklavinone as sugar acceptor)</KM>
        <text evidence="2 3">kcat is 9.6 sec(-1) for glycosyltransferase activity with aklavinone as sugar acceptor and TDP-L-rhodosamine as sugar donor. kcat is 0.05 sec(-1) for glycosyltransferase activity without AknT and with aklavinone as sugar acceptor and TDP-L-rhodosamine as sugar donor. kcat is 0.17 min(-1) for glycosyltransferase activity with aklavinone as sugar acceptor and dTDP-4-amino-2-deoxyrhamnose as sugar donor. kcat is 0.082 min(-1) for glycosyltransferase activity with epsilon-rhodomycinone as sugar acceptor and TDP-2-deoxyfucose as sugar donor.</text>
    </kinetics>
</comment>
<comment type="similarity">
    <text evidence="5">Belongs to the glycosyltransferase 28 family.</text>
</comment>
<reference key="1">
    <citation type="journal article" date="2000" name="Mol. Gen. Genet.">
        <title>A gene cluster from Streptomyces galilaeus involved in glycosylation of aclarubicin.</title>
        <authorList>
            <person name="Raty K."/>
            <person name="Kunnari T."/>
            <person name="Hakala J."/>
            <person name="Mantsala P."/>
            <person name="Ylihonko K."/>
        </authorList>
    </citation>
    <scope>NUCLEOTIDE SEQUENCE [GENOMIC DNA]</scope>
    <source>
        <strain>ATCC 31615</strain>
    </source>
</reference>
<reference key="2">
    <citation type="journal article" date="2005" name="Chem. Biol.">
        <title>AknT is an activating protein for the glycosyltransferase AknS in L-aminodeoxysugar transfer to the aglycone of aclacinomycin A.</title>
        <authorList>
            <person name="Lu W."/>
            <person name="Leimkuhler C."/>
            <person name="Gatto G.J. Jr."/>
            <person name="Kruger R.G."/>
            <person name="Oberthuer M."/>
            <person name="Kahne D."/>
            <person name="Walsh C.T."/>
        </authorList>
    </citation>
    <scope>FUNCTION</scope>
    <scope>CATALYTIC ACTIVITY</scope>
    <scope>BIOPHYSICOCHEMICAL PROPERTIES</scope>
    <scope>ACTIVITY REGULATION</scope>
    <scope>SUBSTRATE SPECIFICITY</scope>
    <source>
        <strain>ATCC 31615</strain>
    </source>
</reference>
<reference key="3">
    <citation type="journal article" date="2007" name="J. Am. Chem. Soc.">
        <title>Characterization of rhodosaminyl transfer by the AknS/AknT glycosylation complex and its use in reconstituting the biosynthetic pathway of aclacinomycin A.</title>
        <authorList>
            <person name="Leimkuhler C."/>
            <person name="Fridman M."/>
            <person name="Lupoli T."/>
            <person name="Walker S."/>
            <person name="Walsh C.T."/>
            <person name="Kahne D."/>
        </authorList>
    </citation>
    <scope>FUNCTION</scope>
    <scope>CATALYTIC ACTIVITY</scope>
    <scope>BIOPHYSICOCHEMICAL PROPERTIES</scope>
    <scope>ACTIVITY REGULATION</scope>
    <scope>SUBSTRATE SPECIFICITY</scope>
    <source>
        <strain>ATCC 31615</strain>
    </source>
</reference>
<protein>
    <recommendedName>
        <fullName evidence="4">Aklavinone 7-beta-L-rhodosaminyltransferase</fullName>
        <ecNumber evidence="2 3">2.4.1.326</ecNumber>
    </recommendedName>
</protein>
<gene>
    <name evidence="4" type="primary">aknS</name>
</gene>
<dbReference type="EC" id="2.4.1.326" evidence="2 3"/>
<dbReference type="EMBL" id="AF264025">
    <property type="protein sequence ID" value="AAF73455.1"/>
    <property type="molecule type" value="Genomic_DNA"/>
</dbReference>
<dbReference type="SMR" id="Q9L4U6"/>
<dbReference type="CAZy" id="GT1">
    <property type="family name" value="Glycosyltransferase Family 1"/>
</dbReference>
<dbReference type="KEGG" id="ag:AAF73455"/>
<dbReference type="BioCyc" id="MetaCyc:MONOMER-18192"/>
<dbReference type="SABIO-RK" id="Q9L4U6"/>
<dbReference type="GO" id="GO:0016758">
    <property type="term" value="F:hexosyltransferase activity"/>
    <property type="evidence" value="ECO:0007669"/>
    <property type="project" value="UniProtKB-ARBA"/>
</dbReference>
<dbReference type="GO" id="GO:0008194">
    <property type="term" value="F:UDP-glycosyltransferase activity"/>
    <property type="evidence" value="ECO:0007669"/>
    <property type="project" value="InterPro"/>
</dbReference>
<dbReference type="GO" id="GO:0017000">
    <property type="term" value="P:antibiotic biosynthetic process"/>
    <property type="evidence" value="ECO:0007669"/>
    <property type="project" value="UniProtKB-KW"/>
</dbReference>
<dbReference type="CDD" id="cd03784">
    <property type="entry name" value="GT1_Gtf-like"/>
    <property type="match status" value="1"/>
</dbReference>
<dbReference type="FunFam" id="3.40.50.2000:FF:000072">
    <property type="entry name" value="Glycosyl transferase"/>
    <property type="match status" value="1"/>
</dbReference>
<dbReference type="Gene3D" id="3.40.50.2000">
    <property type="entry name" value="Glycogen Phosphorylase B"/>
    <property type="match status" value="2"/>
</dbReference>
<dbReference type="InterPro" id="IPR010610">
    <property type="entry name" value="EryCIII-like_C"/>
</dbReference>
<dbReference type="InterPro" id="IPR048284">
    <property type="entry name" value="EryCIII-like_N"/>
</dbReference>
<dbReference type="InterPro" id="IPR030953">
    <property type="entry name" value="Glycosyl_450act"/>
</dbReference>
<dbReference type="InterPro" id="IPR050426">
    <property type="entry name" value="Glycosyltransferase_28"/>
</dbReference>
<dbReference type="InterPro" id="IPR002213">
    <property type="entry name" value="UDP_glucos_trans"/>
</dbReference>
<dbReference type="NCBIfam" id="TIGR04516">
    <property type="entry name" value="glycosyl_450act"/>
    <property type="match status" value="1"/>
</dbReference>
<dbReference type="PANTHER" id="PTHR48050">
    <property type="entry name" value="STEROL 3-BETA-GLUCOSYLTRANSFERASE"/>
    <property type="match status" value="1"/>
</dbReference>
<dbReference type="PANTHER" id="PTHR48050:SF13">
    <property type="entry name" value="STEROL 3-BETA-GLUCOSYLTRANSFERASE UGT80A2"/>
    <property type="match status" value="1"/>
</dbReference>
<dbReference type="Pfam" id="PF06722">
    <property type="entry name" value="EryCIII-like_C"/>
    <property type="match status" value="1"/>
</dbReference>
<dbReference type="Pfam" id="PF21036">
    <property type="entry name" value="EryCIII-like_N"/>
    <property type="match status" value="1"/>
</dbReference>
<dbReference type="SUPFAM" id="SSF53756">
    <property type="entry name" value="UDP-Glycosyltransferase/glycogen phosphorylase"/>
    <property type="match status" value="1"/>
</dbReference>
<name>AKNS_STRGJ</name>
<evidence type="ECO:0000255" key="1"/>
<evidence type="ECO:0000269" key="2">
    <source>
    </source>
</evidence>
<evidence type="ECO:0000269" key="3">
    <source>
    </source>
</evidence>
<evidence type="ECO:0000303" key="4">
    <source>
    </source>
</evidence>
<evidence type="ECO:0000305" key="5"/>
<accession>Q9L4U6</accession>